<gene>
    <name evidence="1" type="primary">hrcA</name>
    <name type="ordered locus">SP70585_0571</name>
</gene>
<dbReference type="EMBL" id="CP000918">
    <property type="protein sequence ID" value="ACO17079.1"/>
    <property type="molecule type" value="Genomic_DNA"/>
</dbReference>
<dbReference type="RefSeq" id="WP_000255774.1">
    <property type="nucleotide sequence ID" value="NC_012468.1"/>
</dbReference>
<dbReference type="SMR" id="C1C5N5"/>
<dbReference type="KEGG" id="snm:SP70585_0571"/>
<dbReference type="HOGENOM" id="CLU_050019_1_0_9"/>
<dbReference type="Proteomes" id="UP000002211">
    <property type="component" value="Chromosome"/>
</dbReference>
<dbReference type="GO" id="GO:0003677">
    <property type="term" value="F:DNA binding"/>
    <property type="evidence" value="ECO:0007669"/>
    <property type="project" value="InterPro"/>
</dbReference>
<dbReference type="GO" id="GO:0045892">
    <property type="term" value="P:negative regulation of DNA-templated transcription"/>
    <property type="evidence" value="ECO:0007669"/>
    <property type="project" value="UniProtKB-UniRule"/>
</dbReference>
<dbReference type="Gene3D" id="3.30.450.40">
    <property type="match status" value="1"/>
</dbReference>
<dbReference type="Gene3D" id="3.30.390.60">
    <property type="entry name" value="Heat-inducible transcription repressor hrca homolog, domain 3"/>
    <property type="match status" value="1"/>
</dbReference>
<dbReference type="Gene3D" id="1.10.10.10">
    <property type="entry name" value="Winged helix-like DNA-binding domain superfamily/Winged helix DNA-binding domain"/>
    <property type="match status" value="1"/>
</dbReference>
<dbReference type="HAMAP" id="MF_00081">
    <property type="entry name" value="HrcA"/>
    <property type="match status" value="1"/>
</dbReference>
<dbReference type="InterPro" id="IPR029016">
    <property type="entry name" value="GAF-like_dom_sf"/>
</dbReference>
<dbReference type="InterPro" id="IPR002571">
    <property type="entry name" value="HrcA"/>
</dbReference>
<dbReference type="InterPro" id="IPR021153">
    <property type="entry name" value="HrcA_C"/>
</dbReference>
<dbReference type="InterPro" id="IPR036388">
    <property type="entry name" value="WH-like_DNA-bd_sf"/>
</dbReference>
<dbReference type="InterPro" id="IPR036390">
    <property type="entry name" value="WH_DNA-bd_sf"/>
</dbReference>
<dbReference type="InterPro" id="IPR005104">
    <property type="entry name" value="WHTH_HrcA_DNA-bd"/>
</dbReference>
<dbReference type="InterPro" id="IPR023120">
    <property type="entry name" value="WHTH_transcript_rep_HrcA_IDD"/>
</dbReference>
<dbReference type="NCBIfam" id="TIGR00331">
    <property type="entry name" value="hrcA"/>
    <property type="match status" value="1"/>
</dbReference>
<dbReference type="PANTHER" id="PTHR34824">
    <property type="entry name" value="HEAT-INDUCIBLE TRANSCRIPTION REPRESSOR HRCA"/>
    <property type="match status" value="1"/>
</dbReference>
<dbReference type="PANTHER" id="PTHR34824:SF1">
    <property type="entry name" value="HEAT-INDUCIBLE TRANSCRIPTION REPRESSOR HRCA"/>
    <property type="match status" value="1"/>
</dbReference>
<dbReference type="Pfam" id="PF01628">
    <property type="entry name" value="HrcA"/>
    <property type="match status" value="1"/>
</dbReference>
<dbReference type="Pfam" id="PF03444">
    <property type="entry name" value="HrcA_DNA-bdg"/>
    <property type="match status" value="1"/>
</dbReference>
<dbReference type="PIRSF" id="PIRSF005485">
    <property type="entry name" value="HrcA"/>
    <property type="match status" value="1"/>
</dbReference>
<dbReference type="SUPFAM" id="SSF55781">
    <property type="entry name" value="GAF domain-like"/>
    <property type="match status" value="1"/>
</dbReference>
<dbReference type="SUPFAM" id="SSF46785">
    <property type="entry name" value="Winged helix' DNA-binding domain"/>
    <property type="match status" value="1"/>
</dbReference>
<feature type="chain" id="PRO_1000118317" description="Heat-inducible transcription repressor HrcA">
    <location>
        <begin position="1"/>
        <end position="344"/>
    </location>
</feature>
<name>HRCA_STRP7</name>
<keyword id="KW-0678">Repressor</keyword>
<keyword id="KW-0346">Stress response</keyword>
<keyword id="KW-0804">Transcription</keyword>
<keyword id="KW-0805">Transcription regulation</keyword>
<organism>
    <name type="scientific">Streptococcus pneumoniae (strain 70585)</name>
    <dbReference type="NCBI Taxonomy" id="488221"/>
    <lineage>
        <taxon>Bacteria</taxon>
        <taxon>Bacillati</taxon>
        <taxon>Bacillota</taxon>
        <taxon>Bacilli</taxon>
        <taxon>Lactobacillales</taxon>
        <taxon>Streptococcaceae</taxon>
        <taxon>Streptococcus</taxon>
    </lineage>
</organism>
<proteinExistence type="inferred from homology"/>
<accession>C1C5N5</accession>
<evidence type="ECO:0000255" key="1">
    <source>
        <dbReference type="HAMAP-Rule" id="MF_00081"/>
    </source>
</evidence>
<sequence length="344" mass="39370">MVTERQQDILNLIIDIFTKTHEPVGSKALQESINSSSATIRNDMAELEKQGLLEKAHTSSGRMPSVAGFQYYVKHSLDFDRLAENEVYEIVKAFDQEFFKLEDILQESANLLTDLSGCTVVALDVEPSRQRLTAFDIVVLGQHTALAVFTLDESRTVTSQFLIPRNFLQEDLLKLKSIIQERFLGHTVLDIHYKIRTEIPQIIQRYFTTTDNVIDLFEHIFKEMFNENIVMAGKVNLLNFANLAAYQFFDQPQKVALEIREGLREDQMQNVRVADGQESCLADLAVISSKFLIPYRGVGILAIIGPVNLDYQQLINQVNVVNRVLTMKLTDFYRYLSSNHYEVH</sequence>
<reference key="1">
    <citation type="journal article" date="2010" name="Genome Biol.">
        <title>Structure and dynamics of the pan-genome of Streptococcus pneumoniae and closely related species.</title>
        <authorList>
            <person name="Donati C."/>
            <person name="Hiller N.L."/>
            <person name="Tettelin H."/>
            <person name="Muzzi A."/>
            <person name="Croucher N.J."/>
            <person name="Angiuoli S.V."/>
            <person name="Oggioni M."/>
            <person name="Dunning Hotopp J.C."/>
            <person name="Hu F.Z."/>
            <person name="Riley D.R."/>
            <person name="Covacci A."/>
            <person name="Mitchell T.J."/>
            <person name="Bentley S.D."/>
            <person name="Kilian M."/>
            <person name="Ehrlich G.D."/>
            <person name="Rappuoli R."/>
            <person name="Moxon E.R."/>
            <person name="Masignani V."/>
        </authorList>
    </citation>
    <scope>NUCLEOTIDE SEQUENCE [LARGE SCALE GENOMIC DNA]</scope>
    <source>
        <strain>70585</strain>
    </source>
</reference>
<comment type="function">
    <text evidence="1">Negative regulator of class I heat shock genes (grpE-dnaK-dnaJ and groELS operons). Prevents heat-shock induction of these operons.</text>
</comment>
<comment type="similarity">
    <text evidence="1">Belongs to the HrcA family.</text>
</comment>
<protein>
    <recommendedName>
        <fullName evidence="1">Heat-inducible transcription repressor HrcA</fullName>
    </recommendedName>
</protein>